<gene>
    <name evidence="6" type="primary">ACTT6</name>
</gene>
<name>ACTT6_ALTAL</name>
<sequence>MTYFTIKSAAMSPDDDAPSPDINSLGRLMSHSEVESRGNGYEVLQQAGTVRILLSRPERGNALSLSLARDLTRLFQTFSAQHSVHRIVLTGKGKYFCSGMDLGEELYEDATERCLALQDLFGAIDACPKTTIAVINGPAFGGGVGLAFVCDIRVAVSTSFFCLSEVKLGLCPATVSRFIVREWGVSLARMAMLTARKIQPQTLHEMGVLHAVALDEEALEAVTRDVLNDLRFAAPQATAWCKVLTRKTRNANSDHDQLARQIFEAMVVAGSESEYGVAQFRLGNKNICWEQVECRHIG</sequence>
<protein>
    <recommendedName>
        <fullName evidence="6">Enoyl-CoA hydratase ACTT6</fullName>
        <ecNumber evidence="9">4.2.1.-</ecNumber>
    </recommendedName>
    <alternativeName>
        <fullName evidence="6">ACT-toxin biosynthesis protein 6</fullName>
    </alternativeName>
</protein>
<feature type="chain" id="PRO_0000444836" description="Enoyl-CoA hydratase ACTT6">
    <location>
        <begin position="1"/>
        <end position="298"/>
    </location>
</feature>
<evidence type="ECO:0000269" key="1">
    <source>
    </source>
</evidence>
<evidence type="ECO:0000269" key="2">
    <source>
    </source>
</evidence>
<evidence type="ECO:0000269" key="3">
    <source>
    </source>
</evidence>
<evidence type="ECO:0000269" key="4">
    <source>
    </source>
</evidence>
<evidence type="ECO:0000269" key="5">
    <source>
    </source>
</evidence>
<evidence type="ECO:0000303" key="6">
    <source>
    </source>
</evidence>
<evidence type="ECO:0000303" key="7">
    <source>
    </source>
</evidence>
<evidence type="ECO:0000305" key="8"/>
<evidence type="ECO:0000305" key="9">
    <source>
    </source>
</evidence>
<comment type="function">
    <text evidence="1 2 3 4 5 7">Enoyl-CoA hydratase; part of the gene clusters that mediate the biosynthesis of the host-selective toxins (HSTs) ACT-toxins responsible for brown spot of tangerine disease by the tangerine pathotype which affects tangerines and mandarins (PubMed:19271978). ACT-toxins consist of three moieties, 9,10-epoxy-8-hydroxy-9-methyl-decatrienoic acid (EDA), valine and a polyketide (PubMed:22846083). ACT-toxin I is toxic to both citrus and pear; toxin II the 5''-deoxy derivative of ACT-toxin I, is highly toxic to pear and slightly toxic to citrus (PubMed:22846083). On cellular level, ACT-toxins affect plasma membrane of susceptible cells and cause a sudden increase in loss of K(+) after a few minutes of toxin treatment (PubMed:22846083). The acyl-CoA ligase ACTT1, the hydrolase ACTT2, the enoyl-CoA hydratases ACTT3 and ACTT6, and the acyl-CoA synthetase ACTT5 are all involved in the biosynthesis of the AK-, AF- and ACT-toxin common 9,10-epoxy-8-hydroxy-9-methyl-decatrienoic acid (EDA) structural moiety (PubMed:18944496, PubMed:18986255, PubMed:19271978). The exact role of each enzyme, and of additional enzymes identified within the AF-toxin clusters have still to be determined (PubMed:18944496, PubMed:18986255, PubMed:19271978). On the other hand, ACTTS1 to ACTTS4 are specific to the tangerine pathotype (PubMed:22846083). The function of ACTTS3 is to elongate the polyketide chain portion of ACT-toxin that is unique to this toxin (PubMed:20192828). The enoyl-reductase ACTTS2 might complement the missing enoyl-reductase (ER) domain in ACTTS3 in the synthesis of the polyketide portion of ACT-toxin (PubMed:20055645). The roles of the nonribosomal peptide synthetases-related proteins ACTTS1 and ACTTS4 have also still not been elucidated (PubMed:22846083).</text>
</comment>
<comment type="pathway">
    <text evidence="3">Mycotoxin biosynthesis.</text>
</comment>
<comment type="disruption phenotype">
    <text evidence="3">Leads to drastic reduction of ACT-toxin production and disease severity after inoculation on detached leaves.</text>
</comment>
<comment type="miscellaneous">
    <text evidence="2">Gene clusters encoding host-selective toxins (HSTs) are localized on conditionally dispensable chromosomes (CDCs), also called supernumerary chromosomes, where they are present in multiple copies (PubMed:18986255). The CDCs are not essential for saprophytic growth but controls host-selective pathogenicity (PubMed:18986255). Although conventional disruption could not be accomplished due to the high number of the copies identified in the genome, the high sequence identity among these copies is likely an advantage for RNA silencing, because it allows knockdown of all copies of this gene simultaneously (PubMed:18986255).</text>
</comment>
<comment type="similarity">
    <text evidence="8">Belongs to the enoyl-CoA hydratase/isomerase family.</text>
</comment>
<reference key="1">
    <citation type="journal article" date="2009" name="Phytopathology">
        <title>Function of genes encoding acyl-CoA synthetase and enoyl-CoA hydratase for host-selective act-toxin biosynthesis in the tangerine pathotype of Alternaria alternata.</title>
        <authorList>
            <person name="Miyamoto M."/>
            <person name="Ishii Y."/>
            <person name="Honda A."/>
            <person name="Masunaka A."/>
            <person name="Tsuge T."/>
            <person name="Yamamoto M."/>
            <person name="Ohtani K."/>
            <person name="Fukumoto T."/>
            <person name="Gomi K."/>
            <person name="Peever T.L."/>
            <person name="Akimitsu K."/>
        </authorList>
    </citation>
    <scope>NUCLEOTIDE SEQUENCE [GENOMIC DNA]</scope>
    <scope>FUNCTION</scope>
    <scope>DISRUPTION PHENOTYPE</scope>
    <scope>PATHWAY</scope>
    <source>
        <strain>SH20</strain>
    </source>
</reference>
<reference key="2">
    <citation type="journal article" date="2000" name="Phytopathology">
        <title>Distribution and characterization of AKT homologs in the tangerine pathotype of Alternaria alternata.</title>
        <authorList>
            <person name="Masunaka A."/>
            <person name="Tanaka A."/>
            <person name="Tsuge T."/>
            <person name="Peever T.L."/>
            <person name="Timmer L.W."/>
            <person name="Yamamoto M."/>
            <person name="Yamamoto H."/>
            <person name="Akimitsu K."/>
        </authorList>
    </citation>
    <scope>FUNCTION</scope>
</reference>
<reference key="3">
    <citation type="journal article" date="2008" name="Mol. Plant Microbe Interact.">
        <title>Functional analysis of a multicopy host-selective ACT-toxin biosynthesis gene in the tangerine pathotype of Alternaria alternata using RNA silencing.</title>
        <authorList>
            <person name="Miyamoto Y."/>
            <person name="Masunaka A."/>
            <person name="Tsuge T."/>
            <person name="Yamamoto M."/>
            <person name="Ohtani K."/>
            <person name="Fukumoto T."/>
            <person name="Gomi K."/>
            <person name="Peever T.L."/>
            <person name="Akimitsu K."/>
        </authorList>
    </citation>
    <scope>FUNCTION</scope>
    <source>
        <strain>SH20</strain>
    </source>
</reference>
<reference key="4">
    <citation type="journal article" date="2010" name="Phytopathology">
        <title>Role of the host-selective ACT-toxin synthesis gene ACTTS2 encoding an enoyl-reductase in pathogenicity of the tangerine pathotype of Alternaria alternata.</title>
        <authorList>
            <person name="Ajiro N."/>
            <person name="Miyamoto Y."/>
            <person name="Masunaka A."/>
            <person name="Tsuge T."/>
            <person name="Yamamoto M."/>
            <person name="Ohtani K."/>
            <person name="Fukumoto T."/>
            <person name="Gomi K."/>
            <person name="Peever T.L."/>
            <person name="Izumi Y."/>
            <person name="Tada Y."/>
            <person name="Akimitsu K."/>
        </authorList>
    </citation>
    <scope>FUNCTION</scope>
    <source>
        <strain>SH20</strain>
    </source>
</reference>
<reference key="5">
    <citation type="journal article" date="2010" name="Mol. Plant Microbe Interact.">
        <title>ACTTS3 encoding a polyketide synthase is essential for the biosynthesis of ACT-toxin and pathogenicity in the tangerine pathotype of Alternaria alternata.</title>
        <authorList>
            <person name="Miyamoto Y."/>
            <person name="Masunaka A."/>
            <person name="Tsuge T."/>
            <person name="Yamamoto M."/>
            <person name="Ohtani K."/>
            <person name="Fukumoto T."/>
            <person name="Gomi K."/>
            <person name="Peever T.L."/>
            <person name="Tada Y."/>
            <person name="Ichimura K."/>
            <person name="Akimitsu K."/>
        </authorList>
    </citation>
    <scope>FUNCTION</scope>
    <source>
        <strain>SH20</strain>
    </source>
</reference>
<reference key="6">
    <citation type="journal article" date="2013" name="FEMS Microbiol. Rev.">
        <title>Host-selective toxins produced by the plant pathogenic fungus Alternaria alternata.</title>
        <authorList>
            <person name="Tsuge T."/>
            <person name="Harimoto Y."/>
            <person name="Akimitsu K."/>
            <person name="Ohtani K."/>
            <person name="Kodama M."/>
            <person name="Akagi Y."/>
            <person name="Egusa M."/>
            <person name="Yamamoto M."/>
            <person name="Otani H."/>
        </authorList>
    </citation>
    <scope>REVIEW ON HOST-SELECTIVE TOXINS</scope>
</reference>
<keyword id="KW-0456">Lyase</keyword>
<keyword id="KW-0843">Virulence</keyword>
<accession>C5NN19</accession>
<proteinExistence type="inferred from homology"/>
<organism>
    <name type="scientific">Alternaria alternata</name>
    <name type="common">Alternaria rot fungus</name>
    <name type="synonym">Torula alternata</name>
    <dbReference type="NCBI Taxonomy" id="5599"/>
    <lineage>
        <taxon>Eukaryota</taxon>
        <taxon>Fungi</taxon>
        <taxon>Dikarya</taxon>
        <taxon>Ascomycota</taxon>
        <taxon>Pezizomycotina</taxon>
        <taxon>Dothideomycetes</taxon>
        <taxon>Pleosporomycetidae</taxon>
        <taxon>Pleosporales</taxon>
        <taxon>Pleosporineae</taxon>
        <taxon>Pleosporaceae</taxon>
        <taxon>Alternaria</taxon>
        <taxon>Alternaria sect. Alternaria</taxon>
        <taxon>Alternaria alternata complex</taxon>
    </lineage>
</organism>
<dbReference type="EC" id="4.2.1.-" evidence="9"/>
<dbReference type="EMBL" id="AB444614">
    <property type="protein sequence ID" value="BAH83503.1"/>
    <property type="molecule type" value="Genomic_DNA"/>
</dbReference>
<dbReference type="SMR" id="C5NN19"/>
<dbReference type="GO" id="GO:0016829">
    <property type="term" value="F:lyase activity"/>
    <property type="evidence" value="ECO:0007669"/>
    <property type="project" value="UniProtKB-KW"/>
</dbReference>
<dbReference type="CDD" id="cd06558">
    <property type="entry name" value="crotonase-like"/>
    <property type="match status" value="1"/>
</dbReference>
<dbReference type="Gene3D" id="3.90.226.10">
    <property type="entry name" value="2-enoyl-CoA Hydratase, Chain A, domain 1"/>
    <property type="match status" value="1"/>
</dbReference>
<dbReference type="InterPro" id="IPR029045">
    <property type="entry name" value="ClpP/crotonase-like_dom_sf"/>
</dbReference>
<dbReference type="InterPro" id="IPR001753">
    <property type="entry name" value="Enoyl-CoA_hydra/iso"/>
</dbReference>
<dbReference type="InterPro" id="IPR051683">
    <property type="entry name" value="Enoyl-CoA_Hydratase/Isomerase"/>
</dbReference>
<dbReference type="PANTHER" id="PTHR42964">
    <property type="entry name" value="ENOYL-COA HYDRATASE"/>
    <property type="match status" value="1"/>
</dbReference>
<dbReference type="PANTHER" id="PTHR42964:SF1">
    <property type="entry name" value="POLYKETIDE BIOSYNTHESIS ENOYL-COA HYDRATASE PKSH-RELATED"/>
    <property type="match status" value="1"/>
</dbReference>
<dbReference type="Pfam" id="PF00378">
    <property type="entry name" value="ECH_1"/>
    <property type="match status" value="1"/>
</dbReference>
<dbReference type="SUPFAM" id="SSF52096">
    <property type="entry name" value="ClpP/crotonase"/>
    <property type="match status" value="1"/>
</dbReference>